<gene>
    <name type="primary">mrps35</name>
    <name type="ORF">NCU01894</name>
</gene>
<evidence type="ECO:0000256" key="1">
    <source>
        <dbReference type="SAM" id="MobiDB-lite"/>
    </source>
</evidence>
<evidence type="ECO:0000269" key="2">
    <source>
    </source>
</evidence>
<evidence type="ECO:0000303" key="3">
    <source>
    </source>
</evidence>
<evidence type="ECO:0000305" key="4"/>
<evidence type="ECO:0000305" key="5">
    <source>
    </source>
</evidence>
<evidence type="ECO:0007744" key="6">
    <source>
        <dbReference type="PDB" id="6YW5"/>
    </source>
</evidence>
<evidence type="ECO:0007744" key="7">
    <source>
        <dbReference type="PDB" id="6YWE"/>
    </source>
</evidence>
<dbReference type="EMBL" id="CM002236">
    <property type="protein sequence ID" value="EAA36289.1"/>
    <property type="molecule type" value="Genomic_DNA"/>
</dbReference>
<dbReference type="RefSeq" id="XP_965525.1">
    <property type="nucleotide sequence ID" value="XM_960432.3"/>
</dbReference>
<dbReference type="PDB" id="6YW5">
    <property type="method" value="EM"/>
    <property type="resolution" value="2.85 A"/>
    <property type="chains" value="66=1-348"/>
</dbReference>
<dbReference type="PDB" id="6YWE">
    <property type="method" value="EM"/>
    <property type="resolution" value="2.99 A"/>
    <property type="chains" value="66=1-348"/>
</dbReference>
<dbReference type="PDB" id="6YWX">
    <property type="method" value="EM"/>
    <property type="resolution" value="3.10 A"/>
    <property type="chains" value="66=1-348"/>
</dbReference>
<dbReference type="PDB" id="6YWY">
    <property type="method" value="EM"/>
    <property type="resolution" value="3.05 A"/>
    <property type="chains" value="66=1-348"/>
</dbReference>
<dbReference type="PDBsum" id="6YW5"/>
<dbReference type="PDBsum" id="6YWE"/>
<dbReference type="PDBsum" id="6YWX"/>
<dbReference type="PDBsum" id="6YWY"/>
<dbReference type="EMDB" id="EMD-10958"/>
<dbReference type="EMDB" id="EMD-10965"/>
<dbReference type="EMDB" id="EMD-10978"/>
<dbReference type="EMDB" id="EMD-10985"/>
<dbReference type="SMR" id="Q7SHB2"/>
<dbReference type="STRING" id="367110.Q7SHB2"/>
<dbReference type="PaxDb" id="5141-EFNCRP00000001140"/>
<dbReference type="EnsemblFungi" id="EAA36289">
    <property type="protein sequence ID" value="EAA36289"/>
    <property type="gene ID" value="NCU01894"/>
</dbReference>
<dbReference type="GeneID" id="3881703"/>
<dbReference type="KEGG" id="ncr:NCU01894"/>
<dbReference type="VEuPathDB" id="FungiDB:NCU01894"/>
<dbReference type="HOGENOM" id="CLU_049223_1_0_1"/>
<dbReference type="InParanoid" id="Q7SHB2"/>
<dbReference type="OrthoDB" id="10052321at2759"/>
<dbReference type="Proteomes" id="UP000001805">
    <property type="component" value="Chromosome 1, Linkage Group I"/>
</dbReference>
<dbReference type="GO" id="GO:0005763">
    <property type="term" value="C:mitochondrial small ribosomal subunit"/>
    <property type="evidence" value="ECO:0000318"/>
    <property type="project" value="GO_Central"/>
</dbReference>
<dbReference type="GO" id="GO:0003735">
    <property type="term" value="F:structural constituent of ribosome"/>
    <property type="evidence" value="ECO:0000318"/>
    <property type="project" value="GO_Central"/>
</dbReference>
<dbReference type="GO" id="GO:0032543">
    <property type="term" value="P:mitochondrial translation"/>
    <property type="evidence" value="ECO:0000318"/>
    <property type="project" value="GO_Central"/>
</dbReference>
<dbReference type="InterPro" id="IPR021036">
    <property type="entry name" value="Ribosomal_mS45"/>
</dbReference>
<dbReference type="PANTHER" id="PTHR28158">
    <property type="entry name" value="37S RIBOSOMAL PROTEIN S35, MITOCHONDRIAL"/>
    <property type="match status" value="1"/>
</dbReference>
<dbReference type="PANTHER" id="PTHR28158:SF1">
    <property type="entry name" value="SMALL RIBOSOMAL SUBUNIT PROTEIN MS45"/>
    <property type="match status" value="1"/>
</dbReference>
<dbReference type="Pfam" id="PF12298">
    <property type="entry name" value="Bot1p"/>
    <property type="match status" value="1"/>
</dbReference>
<sequence length="348" mass="39212">MPPRIPNAPSSLLLQSSACSGSSSRCTASRLPTWASSCSSSSPQSSQPTTHQQQCSSFSTTAPAHVQSVRRQKMFSWLDKKGSAYKEHTRQGPNLLGGQGKDGLAVPFPNNPYFKSQPVLSEGSREIIYQDVMEKGLPIKAVSAKYNVDVRRVAAVIRLKEIEKRWIKEYKPLARPYARAVMKMLPQTVLGGPDQKPHESINDVHVHSYTTQQLFVPVSESREFTREDAAKAFGDHILPVDKKLRVPELIEFQKDLLKEVPLQEANRKFLNATAASEAKIAEREAKRRQAVEDAITRVKTDRFEFRFQEFNAENVGHDGRDRNAVGWRYGVPFPDRKRSQIKIPTKVE</sequence>
<organism>
    <name type="scientific">Neurospora crassa (strain ATCC 24698 / 74-OR23-1A / CBS 708.71 / DSM 1257 / FGSC 987)</name>
    <dbReference type="NCBI Taxonomy" id="367110"/>
    <lineage>
        <taxon>Eukaryota</taxon>
        <taxon>Fungi</taxon>
        <taxon>Dikarya</taxon>
        <taxon>Ascomycota</taxon>
        <taxon>Pezizomycotina</taxon>
        <taxon>Sordariomycetes</taxon>
        <taxon>Sordariomycetidae</taxon>
        <taxon>Sordariales</taxon>
        <taxon>Sordariaceae</taxon>
        <taxon>Neurospora</taxon>
    </lineage>
</organism>
<proteinExistence type="evidence at protein level"/>
<accession>Q7SHB2</accession>
<name>RT35_NEUCR</name>
<reference key="1">
    <citation type="journal article" date="2003" name="Nature">
        <title>The genome sequence of the filamentous fungus Neurospora crassa.</title>
        <authorList>
            <person name="Galagan J.E."/>
            <person name="Calvo S.E."/>
            <person name="Borkovich K.A."/>
            <person name="Selker E.U."/>
            <person name="Read N.D."/>
            <person name="Jaffe D.B."/>
            <person name="FitzHugh W."/>
            <person name="Ma L.-J."/>
            <person name="Smirnov S."/>
            <person name="Purcell S."/>
            <person name="Rehman B."/>
            <person name="Elkins T."/>
            <person name="Engels R."/>
            <person name="Wang S."/>
            <person name="Nielsen C.B."/>
            <person name="Butler J."/>
            <person name="Endrizzi M."/>
            <person name="Qui D."/>
            <person name="Ianakiev P."/>
            <person name="Bell-Pedersen D."/>
            <person name="Nelson M.A."/>
            <person name="Werner-Washburne M."/>
            <person name="Selitrennikoff C.P."/>
            <person name="Kinsey J.A."/>
            <person name="Braun E.L."/>
            <person name="Zelter A."/>
            <person name="Schulte U."/>
            <person name="Kothe G.O."/>
            <person name="Jedd G."/>
            <person name="Mewes H.-W."/>
            <person name="Staben C."/>
            <person name="Marcotte E."/>
            <person name="Greenberg D."/>
            <person name="Roy A."/>
            <person name="Foley K."/>
            <person name="Naylor J."/>
            <person name="Stange-Thomann N."/>
            <person name="Barrett R."/>
            <person name="Gnerre S."/>
            <person name="Kamal M."/>
            <person name="Kamvysselis M."/>
            <person name="Mauceli E.W."/>
            <person name="Bielke C."/>
            <person name="Rudd S."/>
            <person name="Frishman D."/>
            <person name="Krystofova S."/>
            <person name="Rasmussen C."/>
            <person name="Metzenberg R.L."/>
            <person name="Perkins D.D."/>
            <person name="Kroken S."/>
            <person name="Cogoni C."/>
            <person name="Macino G."/>
            <person name="Catcheside D.E.A."/>
            <person name="Li W."/>
            <person name="Pratt R.J."/>
            <person name="Osmani S.A."/>
            <person name="DeSouza C.P.C."/>
            <person name="Glass N.L."/>
            <person name="Orbach M.J."/>
            <person name="Berglund J.A."/>
            <person name="Voelker R."/>
            <person name="Yarden O."/>
            <person name="Plamann M."/>
            <person name="Seiler S."/>
            <person name="Dunlap J.C."/>
            <person name="Radford A."/>
            <person name="Aramayo R."/>
            <person name="Natvig D.O."/>
            <person name="Alex L.A."/>
            <person name="Mannhaupt G."/>
            <person name="Ebbole D.J."/>
            <person name="Freitag M."/>
            <person name="Paulsen I."/>
            <person name="Sachs M.S."/>
            <person name="Lander E.S."/>
            <person name="Nusbaum C."/>
            <person name="Birren B.W."/>
        </authorList>
    </citation>
    <scope>NUCLEOTIDE SEQUENCE [LARGE SCALE GENOMIC DNA]</scope>
    <source>
        <strain>ATCC 24698 / 74-OR23-1A / CBS 708.71 / DSM 1257 / FGSC 987</strain>
    </source>
</reference>
<reference evidence="6 7" key="2">
    <citation type="journal article" date="2020" name="Nat. Commun.">
        <title>Analysis of translating mitoribosome reveals functional characteristics of translation in mitochondria of fungi.</title>
        <authorList>
            <person name="Itoh Y."/>
            <person name="Naschberger A."/>
            <person name="Mortezaei N."/>
            <person name="Herrmann J.M."/>
            <person name="Amunts A."/>
        </authorList>
    </citation>
    <scope>STRUCTURE BY ELECTRON MICROSCOPY (2.85 ANGSTROMS)</scope>
</reference>
<keyword id="KW-0002">3D-structure</keyword>
<keyword id="KW-0496">Mitochondrion</keyword>
<keyword id="KW-1185">Reference proteome</keyword>
<comment type="function">
    <text evidence="5">Component of the mitochondrial ribosome (mitoribosome), a dedicated translation machinery responsible for the synthesis of mitochondrial genome-encoded proteins, including at least some of the essential transmembrane subunits of the mitochondrial respiratory chain. The mitoribosomes are attached to the mitochondrial inner membrane and translation products are cotranslationally integrated into the membrane.</text>
</comment>
<comment type="subunit">
    <text evidence="2">Component of the mitochondrial small ribosomal subunit (mt-SSU). Mature N.crassa 74S mitochondrial ribosomes consist of a small (37S) and a large (54S) subunit. The 37S small subunit contains a 16S ribosomal RNA (16S mt-rRNA) and 32 different proteins. The 54S large subunit contains a 23S rRNA (23S mt-rRNA) and 42 different proteins.</text>
</comment>
<comment type="subcellular location">
    <subcellularLocation>
        <location evidence="2">Mitochondrion</location>
    </subcellularLocation>
</comment>
<comment type="similarity">
    <text evidence="4">Belongs to the mitochondrion-specific ribosomal protein mS45 family.</text>
</comment>
<feature type="chain" id="PRO_0000458563" description="Small ribosomal subunit protein mS45">
    <location>
        <begin position="1"/>
        <end position="348"/>
    </location>
</feature>
<feature type="region of interest" description="Disordered" evidence="1">
    <location>
        <begin position="37"/>
        <end position="63"/>
    </location>
</feature>
<feature type="compositionally biased region" description="Low complexity" evidence="1">
    <location>
        <begin position="37"/>
        <end position="57"/>
    </location>
</feature>
<protein>
    <recommendedName>
        <fullName evidence="3">Small ribosomal subunit protein mS45</fullName>
    </recommendedName>
</protein>